<accession>O29008</accession>
<gene>
    <name evidence="1" type="primary">purQ</name>
    <name type="ordered locus">AF_1260</name>
</gene>
<keyword id="KW-0067">ATP-binding</keyword>
<keyword id="KW-0963">Cytoplasm</keyword>
<keyword id="KW-0315">Glutamine amidotransferase</keyword>
<keyword id="KW-0378">Hydrolase</keyword>
<keyword id="KW-0436">Ligase</keyword>
<keyword id="KW-0547">Nucleotide-binding</keyword>
<keyword id="KW-0658">Purine biosynthesis</keyword>
<keyword id="KW-1185">Reference proteome</keyword>
<dbReference type="EC" id="6.3.5.3" evidence="1"/>
<dbReference type="EC" id="3.5.1.2" evidence="1"/>
<dbReference type="EMBL" id="AE000782">
    <property type="protein sequence ID" value="AAB89983.1"/>
    <property type="molecule type" value="Genomic_DNA"/>
</dbReference>
<dbReference type="PIR" id="C69407">
    <property type="entry name" value="C69407"/>
</dbReference>
<dbReference type="RefSeq" id="WP_010878755.1">
    <property type="nucleotide sequence ID" value="NC_000917.1"/>
</dbReference>
<dbReference type="SMR" id="O29008"/>
<dbReference type="STRING" id="224325.AF_1260"/>
<dbReference type="PaxDb" id="224325-AF_1260"/>
<dbReference type="EnsemblBacteria" id="AAB89983">
    <property type="protein sequence ID" value="AAB89983"/>
    <property type="gene ID" value="AF_1260"/>
</dbReference>
<dbReference type="GeneID" id="1484484"/>
<dbReference type="KEGG" id="afu:AF_1260"/>
<dbReference type="eggNOG" id="arCOG00102">
    <property type="taxonomic scope" value="Archaea"/>
</dbReference>
<dbReference type="HOGENOM" id="CLU_001031_3_0_2"/>
<dbReference type="OrthoDB" id="6486at2157"/>
<dbReference type="PhylomeDB" id="O29008"/>
<dbReference type="UniPathway" id="UPA00074">
    <property type="reaction ID" value="UER00128"/>
</dbReference>
<dbReference type="Proteomes" id="UP000002199">
    <property type="component" value="Chromosome"/>
</dbReference>
<dbReference type="GO" id="GO:0005737">
    <property type="term" value="C:cytoplasm"/>
    <property type="evidence" value="ECO:0007669"/>
    <property type="project" value="UniProtKB-SubCell"/>
</dbReference>
<dbReference type="GO" id="GO:0005524">
    <property type="term" value="F:ATP binding"/>
    <property type="evidence" value="ECO:0007669"/>
    <property type="project" value="UniProtKB-KW"/>
</dbReference>
<dbReference type="GO" id="GO:0004359">
    <property type="term" value="F:glutaminase activity"/>
    <property type="evidence" value="ECO:0007669"/>
    <property type="project" value="UniProtKB-EC"/>
</dbReference>
<dbReference type="GO" id="GO:0004642">
    <property type="term" value="F:phosphoribosylformylglycinamidine synthase activity"/>
    <property type="evidence" value="ECO:0007669"/>
    <property type="project" value="UniProtKB-UniRule"/>
</dbReference>
<dbReference type="GO" id="GO:0006189">
    <property type="term" value="P:'de novo' IMP biosynthetic process"/>
    <property type="evidence" value="ECO:0007669"/>
    <property type="project" value="UniProtKB-UniRule"/>
</dbReference>
<dbReference type="CDD" id="cd01740">
    <property type="entry name" value="GATase1_FGAR_AT"/>
    <property type="match status" value="1"/>
</dbReference>
<dbReference type="Gene3D" id="3.40.50.880">
    <property type="match status" value="1"/>
</dbReference>
<dbReference type="HAMAP" id="MF_00421">
    <property type="entry name" value="PurQ"/>
    <property type="match status" value="1"/>
</dbReference>
<dbReference type="InterPro" id="IPR029062">
    <property type="entry name" value="Class_I_gatase-like"/>
</dbReference>
<dbReference type="InterPro" id="IPR010075">
    <property type="entry name" value="PRibForGlyAmidine_synth_PurQ"/>
</dbReference>
<dbReference type="NCBIfam" id="TIGR01737">
    <property type="entry name" value="FGAM_synth_I"/>
    <property type="match status" value="1"/>
</dbReference>
<dbReference type="NCBIfam" id="NF002252">
    <property type="entry name" value="PRK01175.1"/>
    <property type="match status" value="1"/>
</dbReference>
<dbReference type="PANTHER" id="PTHR47552">
    <property type="entry name" value="PHOSPHORIBOSYLFORMYLGLYCINAMIDINE SYNTHASE SUBUNIT PURQ"/>
    <property type="match status" value="1"/>
</dbReference>
<dbReference type="PANTHER" id="PTHR47552:SF1">
    <property type="entry name" value="PHOSPHORIBOSYLFORMYLGLYCINAMIDINE SYNTHASE SUBUNIT PURQ"/>
    <property type="match status" value="1"/>
</dbReference>
<dbReference type="Pfam" id="PF13507">
    <property type="entry name" value="GATase_5"/>
    <property type="match status" value="1"/>
</dbReference>
<dbReference type="PIRSF" id="PIRSF001586">
    <property type="entry name" value="FGAM_synth_I"/>
    <property type="match status" value="1"/>
</dbReference>
<dbReference type="SMART" id="SM01211">
    <property type="entry name" value="GATase_5"/>
    <property type="match status" value="1"/>
</dbReference>
<dbReference type="SUPFAM" id="SSF52317">
    <property type="entry name" value="Class I glutamine amidotransferase-like"/>
    <property type="match status" value="1"/>
</dbReference>
<dbReference type="PROSITE" id="PS51273">
    <property type="entry name" value="GATASE_TYPE_1"/>
    <property type="match status" value="1"/>
</dbReference>
<reference key="1">
    <citation type="journal article" date="1997" name="Nature">
        <title>The complete genome sequence of the hyperthermophilic, sulphate-reducing archaeon Archaeoglobus fulgidus.</title>
        <authorList>
            <person name="Klenk H.-P."/>
            <person name="Clayton R.A."/>
            <person name="Tomb J.-F."/>
            <person name="White O."/>
            <person name="Nelson K.E."/>
            <person name="Ketchum K.A."/>
            <person name="Dodson R.J."/>
            <person name="Gwinn M.L."/>
            <person name="Hickey E.K."/>
            <person name="Peterson J.D."/>
            <person name="Richardson D.L."/>
            <person name="Kerlavage A.R."/>
            <person name="Graham D.E."/>
            <person name="Kyrpides N.C."/>
            <person name="Fleischmann R.D."/>
            <person name="Quackenbush J."/>
            <person name="Lee N.H."/>
            <person name="Sutton G.G."/>
            <person name="Gill S.R."/>
            <person name="Kirkness E.F."/>
            <person name="Dougherty B.A."/>
            <person name="McKenney K."/>
            <person name="Adams M.D."/>
            <person name="Loftus B.J."/>
            <person name="Peterson S.N."/>
            <person name="Reich C.I."/>
            <person name="McNeil L.K."/>
            <person name="Badger J.H."/>
            <person name="Glodek A."/>
            <person name="Zhou L."/>
            <person name="Overbeek R."/>
            <person name="Gocayne J.D."/>
            <person name="Weidman J.F."/>
            <person name="McDonald L.A."/>
            <person name="Utterback T.R."/>
            <person name="Cotton M.D."/>
            <person name="Spriggs T."/>
            <person name="Artiach P."/>
            <person name="Kaine B.P."/>
            <person name="Sykes S.M."/>
            <person name="Sadow P.W."/>
            <person name="D'Andrea K.P."/>
            <person name="Bowman C."/>
            <person name="Fujii C."/>
            <person name="Garland S.A."/>
            <person name="Mason T.M."/>
            <person name="Olsen G.J."/>
            <person name="Fraser C.M."/>
            <person name="Smith H.O."/>
            <person name="Woese C.R."/>
            <person name="Venter J.C."/>
        </authorList>
    </citation>
    <scope>NUCLEOTIDE SEQUENCE [LARGE SCALE GENOMIC DNA]</scope>
    <source>
        <strain>ATCC 49558 / DSM 4304 / JCM 9628 / NBRC 100126 / VC-16</strain>
    </source>
</reference>
<evidence type="ECO:0000255" key="1">
    <source>
        <dbReference type="HAMAP-Rule" id="MF_00421"/>
    </source>
</evidence>
<organism>
    <name type="scientific">Archaeoglobus fulgidus (strain ATCC 49558 / DSM 4304 / JCM 9628 / NBRC 100126 / VC-16)</name>
    <dbReference type="NCBI Taxonomy" id="224325"/>
    <lineage>
        <taxon>Archaea</taxon>
        <taxon>Methanobacteriati</taxon>
        <taxon>Methanobacteriota</taxon>
        <taxon>Archaeoglobi</taxon>
        <taxon>Archaeoglobales</taxon>
        <taxon>Archaeoglobaceae</taxon>
        <taxon>Archaeoglobus</taxon>
    </lineage>
</organism>
<proteinExistence type="inferred from homology"/>
<protein>
    <recommendedName>
        <fullName evidence="1">Phosphoribosylformylglycinamidine synthase subunit PurQ</fullName>
        <shortName evidence="1">FGAM synthase</shortName>
        <ecNumber evidence="1">6.3.5.3</ecNumber>
    </recommendedName>
    <alternativeName>
        <fullName evidence="1">Formylglycinamide ribonucleotide amidotransferase subunit I</fullName>
        <shortName evidence="1">FGAR amidotransferase I</shortName>
        <shortName evidence="1">FGAR-AT I</shortName>
    </alternativeName>
    <alternativeName>
        <fullName evidence="1">Glutaminase PurQ</fullName>
        <ecNumber evidence="1">3.5.1.2</ecNumber>
    </alternativeName>
    <alternativeName>
        <fullName evidence="1">Phosphoribosylformylglycinamidine synthase subunit I</fullName>
    </alternativeName>
</protein>
<feature type="chain" id="PRO_0000100605" description="Phosphoribosylformylglycinamidine synthase subunit PurQ">
    <location>
        <begin position="1"/>
        <end position="271"/>
    </location>
</feature>
<feature type="domain" description="Glutamine amidotransferase type-1" evidence="1">
    <location>
        <begin position="7"/>
        <end position="253"/>
    </location>
</feature>
<feature type="active site" description="Nucleophile" evidence="1">
    <location>
        <position position="104"/>
    </location>
</feature>
<feature type="active site" evidence="1">
    <location>
        <position position="238"/>
    </location>
</feature>
<feature type="active site" evidence="1">
    <location>
        <position position="240"/>
    </location>
</feature>
<name>PURQ_ARCFU</name>
<comment type="function">
    <text evidence="1">Part of the phosphoribosylformylglycinamidine synthase complex involved in the purines biosynthetic pathway. Catalyzes the ATP-dependent conversion of formylglycinamide ribonucleotide (FGAR) and glutamine to yield formylglycinamidine ribonucleotide (FGAM) and glutamate. The FGAM synthase complex is composed of three subunits. PurQ produces an ammonia molecule by converting glutamine to glutamate. PurL transfers the ammonia molecule to FGAR to form FGAM in an ATP-dependent manner. PurS interacts with PurQ and PurL and is thought to assist in the transfer of the ammonia molecule from PurQ to PurL.</text>
</comment>
<comment type="catalytic activity">
    <reaction evidence="1">
        <text>N(2)-formyl-N(1)-(5-phospho-beta-D-ribosyl)glycinamide + L-glutamine + ATP + H2O = 2-formamido-N(1)-(5-O-phospho-beta-D-ribosyl)acetamidine + L-glutamate + ADP + phosphate + H(+)</text>
        <dbReference type="Rhea" id="RHEA:17129"/>
        <dbReference type="ChEBI" id="CHEBI:15377"/>
        <dbReference type="ChEBI" id="CHEBI:15378"/>
        <dbReference type="ChEBI" id="CHEBI:29985"/>
        <dbReference type="ChEBI" id="CHEBI:30616"/>
        <dbReference type="ChEBI" id="CHEBI:43474"/>
        <dbReference type="ChEBI" id="CHEBI:58359"/>
        <dbReference type="ChEBI" id="CHEBI:147286"/>
        <dbReference type="ChEBI" id="CHEBI:147287"/>
        <dbReference type="ChEBI" id="CHEBI:456216"/>
        <dbReference type="EC" id="6.3.5.3"/>
    </reaction>
</comment>
<comment type="catalytic activity">
    <reaction evidence="1">
        <text>L-glutamine + H2O = L-glutamate + NH4(+)</text>
        <dbReference type="Rhea" id="RHEA:15889"/>
        <dbReference type="ChEBI" id="CHEBI:15377"/>
        <dbReference type="ChEBI" id="CHEBI:28938"/>
        <dbReference type="ChEBI" id="CHEBI:29985"/>
        <dbReference type="ChEBI" id="CHEBI:58359"/>
        <dbReference type="EC" id="3.5.1.2"/>
    </reaction>
</comment>
<comment type="pathway">
    <text evidence="1">Purine metabolism; IMP biosynthesis via de novo pathway; 5-amino-1-(5-phospho-D-ribosyl)imidazole from N(2)-formyl-N(1)-(5-phospho-D-ribosyl)glycinamide: step 1/2.</text>
</comment>
<comment type="subunit">
    <text evidence="1">Part of the FGAM synthase complex composed of 1 PurL, 1 PurQ and 2 PurS subunits.</text>
</comment>
<comment type="subcellular location">
    <subcellularLocation>
        <location evidence="1">Cytoplasm</location>
    </subcellularLocation>
</comment>
<sequence length="271" mass="30786">MDREEIKVAVLRMEGTNCEDETVKAFRSLGVEAEAVHIKQFYSDMIRFEEQRSVFDYQCLVFPGGFSAGDYIRAGAIFSARVKSVLRKDIEEFIKMGYPILGICNGFQVLVELGALPGFDEDKPLAEKPEMALAMNDSSRFECRPTLLKKESEKCIFVKNLKKDVVMFPVAHAEGKVVFPSGKEDEYLERLTSNDQIVFRYVDEKGDYAGYPWNPNGSFYNIAGICNATHTVFGLMPHPERAFFGYQVGRREGYGDGYCIFRSVVDYLEKL</sequence>